<reference key="1">
    <citation type="journal article" date="2001" name="Proc. Natl. Acad. Sci. U.S.A.">
        <title>Identification of a family of Fc receptor homologs with preferential B cell expression.</title>
        <authorList>
            <person name="Davis R.S."/>
            <person name="Wang Y.-H."/>
            <person name="Kubagawa H."/>
            <person name="Cooper M.D."/>
        </authorList>
    </citation>
    <scope>NUCLEOTIDE SEQUENCE [MRNA] (ISOFORM 1)</scope>
    <scope>TISSUE SPECIFICITY</scope>
    <source>
        <tissue>Lymph node</tissue>
    </source>
</reference>
<reference key="2">
    <citation type="journal article" date="2002" name="Immunogenetics">
        <title>A family of highly diverse human and mouse genes structurally links leukocyte FcR, gp42 and PECAM-1.</title>
        <authorList>
            <person name="Guselnikov S.V."/>
            <person name="Ershova S.A."/>
            <person name="Mechetina L.V."/>
            <person name="Najakshin A.M."/>
            <person name="Volkova O.Y."/>
            <person name="Alabyev B.Y."/>
            <person name="Taranin A.V."/>
        </authorList>
    </citation>
    <scope>NUCLEOTIDE SEQUENCE [MRNA] (ISOFORM 2)</scope>
    <source>
        <tissue>Tonsil</tissue>
    </source>
</reference>
<reference key="3">
    <citation type="submission" date="2006-10" db="EMBL/GenBank/DDBJ databases">
        <authorList>
            <person name="Livingston R.J."/>
            <person name="Shaffer T."/>
            <person name="McFarland I."/>
            <person name="Nguyen C.P."/>
            <person name="Stanaway I.B."/>
            <person name="Rajkumar N."/>
            <person name="Johnson E.J."/>
            <person name="da Ponte S.H."/>
            <person name="Willa H."/>
            <person name="Ahearn M.O."/>
            <person name="Bertucci C."/>
            <person name="Acklestad J."/>
            <person name="Carroll A."/>
            <person name="Swanson J."/>
            <person name="Gildersleeve H.I."/>
            <person name="Nickerson D.A."/>
        </authorList>
    </citation>
    <scope>NUCLEOTIDE SEQUENCE [GENOMIC DNA] (ISOFORM 1)</scope>
</reference>
<reference key="4">
    <citation type="journal article" date="2004" name="Nat. Genet.">
        <title>Complete sequencing and characterization of 21,243 full-length human cDNAs.</title>
        <authorList>
            <person name="Ota T."/>
            <person name="Suzuki Y."/>
            <person name="Nishikawa T."/>
            <person name="Otsuki T."/>
            <person name="Sugiyama T."/>
            <person name="Irie R."/>
            <person name="Wakamatsu A."/>
            <person name="Hayashi K."/>
            <person name="Sato H."/>
            <person name="Nagai K."/>
            <person name="Kimura K."/>
            <person name="Makita H."/>
            <person name="Sekine M."/>
            <person name="Obayashi M."/>
            <person name="Nishi T."/>
            <person name="Shibahara T."/>
            <person name="Tanaka T."/>
            <person name="Ishii S."/>
            <person name="Yamamoto J."/>
            <person name="Saito K."/>
            <person name="Kawai Y."/>
            <person name="Isono Y."/>
            <person name="Nakamura Y."/>
            <person name="Nagahari K."/>
            <person name="Murakami K."/>
            <person name="Yasuda T."/>
            <person name="Iwayanagi T."/>
            <person name="Wagatsuma M."/>
            <person name="Shiratori A."/>
            <person name="Sudo H."/>
            <person name="Hosoiri T."/>
            <person name="Kaku Y."/>
            <person name="Kodaira H."/>
            <person name="Kondo H."/>
            <person name="Sugawara M."/>
            <person name="Takahashi M."/>
            <person name="Kanda K."/>
            <person name="Yokoi T."/>
            <person name="Furuya T."/>
            <person name="Kikkawa E."/>
            <person name="Omura Y."/>
            <person name="Abe K."/>
            <person name="Kamihara K."/>
            <person name="Katsuta N."/>
            <person name="Sato K."/>
            <person name="Tanikawa M."/>
            <person name="Yamazaki M."/>
            <person name="Ninomiya K."/>
            <person name="Ishibashi T."/>
            <person name="Yamashita H."/>
            <person name="Murakawa K."/>
            <person name="Fujimori K."/>
            <person name="Tanai H."/>
            <person name="Kimata M."/>
            <person name="Watanabe M."/>
            <person name="Hiraoka S."/>
            <person name="Chiba Y."/>
            <person name="Ishida S."/>
            <person name="Ono Y."/>
            <person name="Takiguchi S."/>
            <person name="Watanabe S."/>
            <person name="Yosida M."/>
            <person name="Hotuta T."/>
            <person name="Kusano J."/>
            <person name="Kanehori K."/>
            <person name="Takahashi-Fujii A."/>
            <person name="Hara H."/>
            <person name="Tanase T.-O."/>
            <person name="Nomura Y."/>
            <person name="Togiya S."/>
            <person name="Komai F."/>
            <person name="Hara R."/>
            <person name="Takeuchi K."/>
            <person name="Arita M."/>
            <person name="Imose N."/>
            <person name="Musashino K."/>
            <person name="Yuuki H."/>
            <person name="Oshima A."/>
            <person name="Sasaki N."/>
            <person name="Aotsuka S."/>
            <person name="Yoshikawa Y."/>
            <person name="Matsunawa H."/>
            <person name="Ichihara T."/>
            <person name="Shiohata N."/>
            <person name="Sano S."/>
            <person name="Moriya S."/>
            <person name="Momiyama H."/>
            <person name="Satoh N."/>
            <person name="Takami S."/>
            <person name="Terashima Y."/>
            <person name="Suzuki O."/>
            <person name="Nakagawa S."/>
            <person name="Senoh A."/>
            <person name="Mizoguchi H."/>
            <person name="Goto Y."/>
            <person name="Shimizu F."/>
            <person name="Wakebe H."/>
            <person name="Hishigaki H."/>
            <person name="Watanabe T."/>
            <person name="Sugiyama A."/>
            <person name="Takemoto M."/>
            <person name="Kawakami B."/>
            <person name="Yamazaki M."/>
            <person name="Watanabe K."/>
            <person name="Kumagai A."/>
            <person name="Itakura S."/>
            <person name="Fukuzumi Y."/>
            <person name="Fujimori Y."/>
            <person name="Komiyama M."/>
            <person name="Tashiro H."/>
            <person name="Tanigami A."/>
            <person name="Fujiwara T."/>
            <person name="Ono T."/>
            <person name="Yamada K."/>
            <person name="Fujii Y."/>
            <person name="Ozaki K."/>
            <person name="Hirao M."/>
            <person name="Ohmori Y."/>
            <person name="Kawabata A."/>
            <person name="Hikiji T."/>
            <person name="Kobatake N."/>
            <person name="Inagaki H."/>
            <person name="Ikema Y."/>
            <person name="Okamoto S."/>
            <person name="Okitani R."/>
            <person name="Kawakami T."/>
            <person name="Noguchi S."/>
            <person name="Itoh T."/>
            <person name="Shigeta K."/>
            <person name="Senba T."/>
            <person name="Matsumura K."/>
            <person name="Nakajima Y."/>
            <person name="Mizuno T."/>
            <person name="Morinaga M."/>
            <person name="Sasaki M."/>
            <person name="Togashi T."/>
            <person name="Oyama M."/>
            <person name="Hata H."/>
            <person name="Watanabe M."/>
            <person name="Komatsu T."/>
            <person name="Mizushima-Sugano J."/>
            <person name="Satoh T."/>
            <person name="Shirai Y."/>
            <person name="Takahashi Y."/>
            <person name="Nakagawa K."/>
            <person name="Okumura K."/>
            <person name="Nagase T."/>
            <person name="Nomura N."/>
            <person name="Kikuchi H."/>
            <person name="Masuho Y."/>
            <person name="Yamashita R."/>
            <person name="Nakai K."/>
            <person name="Yada T."/>
            <person name="Nakamura Y."/>
            <person name="Ohara O."/>
            <person name="Isogai T."/>
            <person name="Sugano S."/>
        </authorList>
    </citation>
    <scope>NUCLEOTIDE SEQUENCE [LARGE SCALE MRNA] (ISOFORMS 1 AND 3)</scope>
    <source>
        <tissue>Peripheral blood</tissue>
    </source>
</reference>
<reference key="5">
    <citation type="journal article" date="2007" name="BMC Genomics">
        <title>The full-ORF clone resource of the German cDNA consortium.</title>
        <authorList>
            <person name="Bechtel S."/>
            <person name="Rosenfelder H."/>
            <person name="Duda A."/>
            <person name="Schmidt C.P."/>
            <person name="Ernst U."/>
            <person name="Wellenreuther R."/>
            <person name="Mehrle A."/>
            <person name="Schuster C."/>
            <person name="Bahr A."/>
            <person name="Bloecker H."/>
            <person name="Heubner D."/>
            <person name="Hoerlein A."/>
            <person name="Michel G."/>
            <person name="Wedler H."/>
            <person name="Koehrer K."/>
            <person name="Ottenwaelder B."/>
            <person name="Poustka A."/>
            <person name="Wiemann S."/>
            <person name="Schupp I."/>
        </authorList>
    </citation>
    <scope>NUCLEOTIDE SEQUENCE [LARGE SCALE MRNA] (ISOFORM 4)</scope>
    <source>
        <tissue>Lymph node</tissue>
    </source>
</reference>
<reference key="6">
    <citation type="journal article" date="2006" name="Nature">
        <title>The DNA sequence and biological annotation of human chromosome 1.</title>
        <authorList>
            <person name="Gregory S.G."/>
            <person name="Barlow K.F."/>
            <person name="McLay K.E."/>
            <person name="Kaul R."/>
            <person name="Swarbreck D."/>
            <person name="Dunham A."/>
            <person name="Scott C.E."/>
            <person name="Howe K.L."/>
            <person name="Woodfine K."/>
            <person name="Spencer C.C.A."/>
            <person name="Jones M.C."/>
            <person name="Gillson C."/>
            <person name="Searle S."/>
            <person name="Zhou Y."/>
            <person name="Kokocinski F."/>
            <person name="McDonald L."/>
            <person name="Evans R."/>
            <person name="Phillips K."/>
            <person name="Atkinson A."/>
            <person name="Cooper R."/>
            <person name="Jones C."/>
            <person name="Hall R.E."/>
            <person name="Andrews T.D."/>
            <person name="Lloyd C."/>
            <person name="Ainscough R."/>
            <person name="Almeida J.P."/>
            <person name="Ambrose K.D."/>
            <person name="Anderson F."/>
            <person name="Andrew R.W."/>
            <person name="Ashwell R.I.S."/>
            <person name="Aubin K."/>
            <person name="Babbage A.K."/>
            <person name="Bagguley C.L."/>
            <person name="Bailey J."/>
            <person name="Beasley H."/>
            <person name="Bethel G."/>
            <person name="Bird C.P."/>
            <person name="Bray-Allen S."/>
            <person name="Brown J.Y."/>
            <person name="Brown A.J."/>
            <person name="Buckley D."/>
            <person name="Burton J."/>
            <person name="Bye J."/>
            <person name="Carder C."/>
            <person name="Chapman J.C."/>
            <person name="Clark S.Y."/>
            <person name="Clarke G."/>
            <person name="Clee C."/>
            <person name="Cobley V."/>
            <person name="Collier R.E."/>
            <person name="Corby N."/>
            <person name="Coville G.J."/>
            <person name="Davies J."/>
            <person name="Deadman R."/>
            <person name="Dunn M."/>
            <person name="Earthrowl M."/>
            <person name="Ellington A.G."/>
            <person name="Errington H."/>
            <person name="Frankish A."/>
            <person name="Frankland J."/>
            <person name="French L."/>
            <person name="Garner P."/>
            <person name="Garnett J."/>
            <person name="Gay L."/>
            <person name="Ghori M.R.J."/>
            <person name="Gibson R."/>
            <person name="Gilby L.M."/>
            <person name="Gillett W."/>
            <person name="Glithero R.J."/>
            <person name="Grafham D.V."/>
            <person name="Griffiths C."/>
            <person name="Griffiths-Jones S."/>
            <person name="Grocock R."/>
            <person name="Hammond S."/>
            <person name="Harrison E.S.I."/>
            <person name="Hart E."/>
            <person name="Haugen E."/>
            <person name="Heath P.D."/>
            <person name="Holmes S."/>
            <person name="Holt K."/>
            <person name="Howden P.J."/>
            <person name="Hunt A.R."/>
            <person name="Hunt S.E."/>
            <person name="Hunter G."/>
            <person name="Isherwood J."/>
            <person name="James R."/>
            <person name="Johnson C."/>
            <person name="Johnson D."/>
            <person name="Joy A."/>
            <person name="Kay M."/>
            <person name="Kershaw J.K."/>
            <person name="Kibukawa M."/>
            <person name="Kimberley A.M."/>
            <person name="King A."/>
            <person name="Knights A.J."/>
            <person name="Lad H."/>
            <person name="Laird G."/>
            <person name="Lawlor S."/>
            <person name="Leongamornlert D.A."/>
            <person name="Lloyd D.M."/>
            <person name="Loveland J."/>
            <person name="Lovell J."/>
            <person name="Lush M.J."/>
            <person name="Lyne R."/>
            <person name="Martin S."/>
            <person name="Mashreghi-Mohammadi M."/>
            <person name="Matthews L."/>
            <person name="Matthews N.S.W."/>
            <person name="McLaren S."/>
            <person name="Milne S."/>
            <person name="Mistry S."/>
            <person name="Moore M.J.F."/>
            <person name="Nickerson T."/>
            <person name="O'Dell C.N."/>
            <person name="Oliver K."/>
            <person name="Palmeiri A."/>
            <person name="Palmer S.A."/>
            <person name="Parker A."/>
            <person name="Patel D."/>
            <person name="Pearce A.V."/>
            <person name="Peck A.I."/>
            <person name="Pelan S."/>
            <person name="Phelps K."/>
            <person name="Phillimore B.J."/>
            <person name="Plumb R."/>
            <person name="Rajan J."/>
            <person name="Raymond C."/>
            <person name="Rouse G."/>
            <person name="Saenphimmachak C."/>
            <person name="Sehra H.K."/>
            <person name="Sheridan E."/>
            <person name="Shownkeen R."/>
            <person name="Sims S."/>
            <person name="Skuce C.D."/>
            <person name="Smith M."/>
            <person name="Steward C."/>
            <person name="Subramanian S."/>
            <person name="Sycamore N."/>
            <person name="Tracey A."/>
            <person name="Tromans A."/>
            <person name="Van Helmond Z."/>
            <person name="Wall M."/>
            <person name="Wallis J.M."/>
            <person name="White S."/>
            <person name="Whitehead S.L."/>
            <person name="Wilkinson J.E."/>
            <person name="Willey D.L."/>
            <person name="Williams H."/>
            <person name="Wilming L."/>
            <person name="Wray P.W."/>
            <person name="Wu Z."/>
            <person name="Coulson A."/>
            <person name="Vaudin M."/>
            <person name="Sulston J.E."/>
            <person name="Durbin R.M."/>
            <person name="Hubbard T."/>
            <person name="Wooster R."/>
            <person name="Dunham I."/>
            <person name="Carter N.P."/>
            <person name="McVean G."/>
            <person name="Ross M.T."/>
            <person name="Harrow J."/>
            <person name="Olson M.V."/>
            <person name="Beck S."/>
            <person name="Rogers J."/>
            <person name="Bentley D.R."/>
        </authorList>
    </citation>
    <scope>NUCLEOTIDE SEQUENCE [LARGE SCALE GENOMIC DNA]</scope>
</reference>
<reference key="7">
    <citation type="submission" date="2005-09" db="EMBL/GenBank/DDBJ databases">
        <authorList>
            <person name="Mural R.J."/>
            <person name="Istrail S."/>
            <person name="Sutton G.G."/>
            <person name="Florea L."/>
            <person name="Halpern A.L."/>
            <person name="Mobarry C.M."/>
            <person name="Lippert R."/>
            <person name="Walenz B."/>
            <person name="Shatkay H."/>
            <person name="Dew I."/>
            <person name="Miller J.R."/>
            <person name="Flanigan M.J."/>
            <person name="Edwards N.J."/>
            <person name="Bolanos R."/>
            <person name="Fasulo D."/>
            <person name="Halldorsson B.V."/>
            <person name="Hannenhalli S."/>
            <person name="Turner R."/>
            <person name="Yooseph S."/>
            <person name="Lu F."/>
            <person name="Nusskern D.R."/>
            <person name="Shue B.C."/>
            <person name="Zheng X.H."/>
            <person name="Zhong F."/>
            <person name="Delcher A.L."/>
            <person name="Huson D.H."/>
            <person name="Kravitz S.A."/>
            <person name="Mouchard L."/>
            <person name="Reinert K."/>
            <person name="Remington K.A."/>
            <person name="Clark A.G."/>
            <person name="Waterman M.S."/>
            <person name="Eichler E.E."/>
            <person name="Adams M.D."/>
            <person name="Hunkapiller M.W."/>
            <person name="Myers E.W."/>
            <person name="Venter J.C."/>
        </authorList>
    </citation>
    <scope>NUCLEOTIDE SEQUENCE [LARGE SCALE GENOMIC DNA]</scope>
</reference>
<reference key="8">
    <citation type="journal article" date="2004" name="Genome Res.">
        <title>The status, quality, and expansion of the NIH full-length cDNA project: the Mammalian Gene Collection (MGC).</title>
        <authorList>
            <consortium name="The MGC Project Team"/>
        </authorList>
    </citation>
    <scope>NUCLEOTIDE SEQUENCE [LARGE SCALE MRNA] (ISOFORM 1)</scope>
    <source>
        <tissue>Blood</tissue>
    </source>
</reference>
<reference key="9">
    <citation type="journal article" date="2002" name="Blood">
        <title>IRTAs: a new family of immunoglobulin-like receptors differentially expressed in B cells.</title>
        <authorList>
            <person name="Miller I."/>
            <person name="Hatzivassiliou G."/>
            <person name="Cattoretti G."/>
            <person name="Mendelsohn C."/>
            <person name="Dalla-Favera R."/>
        </authorList>
    </citation>
    <scope>CHARACTERIZATION</scope>
    <scope>TISSUE SPECIFICITY</scope>
</reference>
<reference key="10">
    <citation type="journal article" date="2005" name="Blood">
        <title>FcRH1: an activation coreceptor on human B cells.</title>
        <authorList>
            <person name="Leu C.-M."/>
            <person name="Davis R.S."/>
            <person name="Gartland L.A."/>
            <person name="Fine W.D."/>
            <person name="Cooper M.D."/>
        </authorList>
    </citation>
    <scope>FUNCTION</scope>
    <scope>SUBCELLULAR LOCATION</scope>
    <scope>PHOSPHORYLATION</scope>
    <scope>INDUCTION</scope>
    <scope>TISSUE SPECIFICITY</scope>
</reference>
<reference key="11">
    <citation type="journal article" date="2006" name="Int. Immunol.">
        <title>Expression pattern of the human FcRH/IRTA receptors in normal tissue and in B-chronic lymphocytic leukemia.</title>
        <authorList>
            <person name="Polson A.G."/>
            <person name="Zheng B."/>
            <person name="Elkins K."/>
            <person name="Chang W."/>
            <person name="Du C."/>
            <person name="Dowd P."/>
            <person name="Yen L."/>
            <person name="Tan C."/>
            <person name="Hongo J.-A."/>
            <person name="Koeppen H."/>
            <person name="Ebens A."/>
        </authorList>
    </citation>
    <scope>SUBCELLULAR LOCATION</scope>
    <scope>TISSUE SPECIFICITY</scope>
</reference>
<comment type="function">
    <text evidence="1 6">Type I transmembrane surface glycoprotein preferentially expressed by B-cells that regulates BCR-mediated signaling responses (PubMed:15479727). Recruits ABL1 as the intracellular effector molecule to enhance B-cell activation (By similarity). Also plays a negative role by suppressing ERK activation under homeostatic and BCR-stimulated conditions in a GRB2-dependent manner (By similarity).</text>
</comment>
<comment type="subunit">
    <text evidence="1">Interacts with ABL1. Interacts with GRB2 and SOS1. Interacts with SHIP-1/INPP5D.</text>
</comment>
<comment type="subcellular location">
    <subcellularLocation>
        <location evidence="6 7">Cell membrane</location>
        <topology evidence="6 7">Single-pass type I membrane protein</topology>
    </subcellularLocation>
</comment>
<comment type="alternative products">
    <event type="alternative splicing"/>
    <isoform>
        <id>Q96LA6-1</id>
        <name>1</name>
        <sequence type="displayed"/>
    </isoform>
    <isoform>
        <id>Q96LA6-2</id>
        <name>2</name>
        <sequence type="described" ref="VSP_033295"/>
    </isoform>
    <isoform>
        <id>Q96LA6-3</id>
        <name>3</name>
        <sequence type="described" ref="VSP_033293 VSP_033294"/>
    </isoform>
    <isoform>
        <id>Q96LA6-4</id>
        <name>4</name>
        <sequence type="described" ref="VSP_033290 VSP_033291 VSP_033292"/>
    </isoform>
</comment>
<comment type="tissue specificity">
    <text evidence="4 5 6 7">Primarily expressed in secondary lymphoid tissues by mature subsets of B-cells. Detected in spleen, lymph node, heart, skeletal muscle, kidney, liver and placenta. Specifically expressed by mature B lineage cells with higher expression in naive versus memory B-cells (at protein level).</text>
</comment>
<comment type="induction">
    <text evidence="6">Down-regulated in activated B-cells.</text>
</comment>
<comment type="PTM">
    <text evidence="6">Phosphorylated on tyrosines upon activation.</text>
</comment>
<feature type="signal peptide" evidence="2">
    <location>
        <begin position="1"/>
        <end position="16"/>
    </location>
</feature>
<feature type="chain" id="PRO_0000331638" description="Fc receptor-like protein 1">
    <location>
        <begin position="17"/>
        <end position="429"/>
    </location>
</feature>
<feature type="topological domain" description="Extracellular" evidence="2">
    <location>
        <begin position="17"/>
        <end position="307"/>
    </location>
</feature>
<feature type="transmembrane region" description="Helical" evidence="2">
    <location>
        <begin position="308"/>
        <end position="328"/>
    </location>
</feature>
<feature type="topological domain" description="Cytoplasmic" evidence="2">
    <location>
        <begin position="329"/>
        <end position="429"/>
    </location>
</feature>
<feature type="domain" description="Ig-like C2-type 1">
    <location>
        <begin position="17"/>
        <end position="104"/>
    </location>
</feature>
<feature type="domain" description="Ig-like C2-type 2">
    <location>
        <begin position="109"/>
        <end position="200"/>
    </location>
</feature>
<feature type="domain" description="Ig-like C2-type 3">
    <location>
        <begin position="208"/>
        <end position="291"/>
    </location>
</feature>
<feature type="short sequence motif" description="ITIM motif 1">
    <location>
        <begin position="354"/>
        <end position="359"/>
    </location>
</feature>
<feature type="short sequence motif" description="ITIM motif 2">
    <location>
        <begin position="367"/>
        <end position="372"/>
    </location>
</feature>
<feature type="short sequence motif" description="ITIM motif 3">
    <location>
        <begin position="379"/>
        <end position="384"/>
    </location>
</feature>
<feature type="short sequence motif" description="ITIM motif 4">
    <location>
        <begin position="410"/>
        <end position="415"/>
    </location>
</feature>
<feature type="short sequence motif" description="ITIM motif 5">
    <location>
        <begin position="423"/>
        <end position="428"/>
    </location>
</feature>
<feature type="glycosylation site" description="N-linked (GlcNAc...) asparagine" evidence="2">
    <location>
        <position position="293"/>
    </location>
</feature>
<feature type="disulfide bond" evidence="3">
    <location>
        <begin position="38"/>
        <end position="86"/>
    </location>
</feature>
<feature type="disulfide bond" evidence="3">
    <location>
        <begin position="134"/>
        <end position="183"/>
    </location>
</feature>
<feature type="disulfide bond" evidence="3">
    <location>
        <begin position="229"/>
        <end position="276"/>
    </location>
</feature>
<feature type="splice variant" id="VSP_033290" description="In isoform 4." evidence="10">
    <location>
        <begin position="1"/>
        <end position="39"/>
    </location>
</feature>
<feature type="splice variant" id="VSP_033291" description="In isoform 4." evidence="10">
    <original>IPVSRPILMLRAPRAQAAVEDVLELHCEALRGSPPI</original>
    <variation>SKFHYPSFSQPVTNWAPHFPGAHKVSLGHAEEVQWG</variation>
    <location>
        <begin position="203"/>
        <end position="238"/>
    </location>
</feature>
<feature type="splice variant" id="VSP_033292" description="In isoform 4." evidence="10">
    <location>
        <begin position="239"/>
        <end position="429"/>
    </location>
</feature>
<feature type="splice variant" id="VSP_033293" description="In isoform 3." evidence="9">
    <location>
        <begin position="296"/>
        <end position="334"/>
    </location>
</feature>
<feature type="splice variant" id="VSP_033294" description="In isoform 3." evidence="9">
    <original>VNVVSGDEVYSLAYYNQPEQESVAAETLGTHMEDKVSLDIYSRLRKANITDVDYEDAM</original>
    <variation>EPREQSVAVHGRQQHSSEQKAQKPWGHIWRTRFP</variation>
    <location>
        <begin position="372"/>
        <end position="429"/>
    </location>
</feature>
<feature type="splice variant" id="VSP_033295" description="In isoform 2." evidence="8">
    <location>
        <position position="395"/>
    </location>
</feature>
<feature type="sequence variant" id="VAR_042923" description="In dbSNP:rs12078586.">
    <original>V</original>
    <variation>M</variation>
    <location>
        <position position="124"/>
    </location>
</feature>
<name>FCRL1_HUMAN</name>
<proteinExistence type="evidence at protein level"/>
<protein>
    <recommendedName>
        <fullName>Fc receptor-like protein 1</fullName>
        <shortName>FcR-like protein 1</shortName>
        <shortName>FcRL1</shortName>
    </recommendedName>
    <alternativeName>
        <fullName>Fc receptor homolog 1</fullName>
        <shortName>FcRH1</shortName>
    </alternativeName>
    <alternativeName>
        <fullName>IFGP family protein 1</fullName>
        <shortName>hIFGP1</shortName>
    </alternativeName>
    <alternativeName>
        <fullName>Immune receptor translocation-associated protein 5</fullName>
    </alternativeName>
    <cdAntigenName>CD307a</cdAntigenName>
</protein>
<evidence type="ECO:0000250" key="1">
    <source>
        <dbReference type="UniProtKB" id="Q8R4Y0"/>
    </source>
</evidence>
<evidence type="ECO:0000255" key="2"/>
<evidence type="ECO:0000255" key="3">
    <source>
        <dbReference type="PROSITE-ProRule" id="PRU00114"/>
    </source>
</evidence>
<evidence type="ECO:0000269" key="4">
    <source>
    </source>
</evidence>
<evidence type="ECO:0000269" key="5">
    <source>
    </source>
</evidence>
<evidence type="ECO:0000269" key="6">
    <source>
    </source>
</evidence>
<evidence type="ECO:0000269" key="7">
    <source>
    </source>
</evidence>
<evidence type="ECO:0000303" key="8">
    <source>
    </source>
</evidence>
<evidence type="ECO:0000303" key="9">
    <source>
    </source>
</evidence>
<evidence type="ECO:0000303" key="10">
    <source>
    </source>
</evidence>
<organism>
    <name type="scientific">Homo sapiens</name>
    <name type="common">Human</name>
    <dbReference type="NCBI Taxonomy" id="9606"/>
    <lineage>
        <taxon>Eukaryota</taxon>
        <taxon>Metazoa</taxon>
        <taxon>Chordata</taxon>
        <taxon>Craniata</taxon>
        <taxon>Vertebrata</taxon>
        <taxon>Euteleostomi</taxon>
        <taxon>Mammalia</taxon>
        <taxon>Eutheria</taxon>
        <taxon>Euarchontoglires</taxon>
        <taxon>Primates</taxon>
        <taxon>Haplorrhini</taxon>
        <taxon>Catarrhini</taxon>
        <taxon>Hominidae</taxon>
        <taxon>Homo</taxon>
    </lineage>
</organism>
<accession>Q96LA6</accession>
<accession>B2RE05</accession>
<accession>Q8N759</accession>
<accession>Q8NDI0</accession>
<accession>Q96PJ6</accession>
<gene>
    <name type="primary">FCRL1</name>
    <name type="synonym">FCRH1</name>
    <name type="synonym">IFGP1</name>
    <name type="synonym">IRTA5</name>
</gene>
<sequence length="429" mass="46936">MLPRLLLLICAPLCEPAELFLIASPSHPTEGSPVTLTCKMPFLQSSDAQFQFCFFRDTRALGPGWSSSPKLQIAAMWKEDTGSYWCEAQTMASKVLRSRRSQINVHRVPVADVSLETQPPGGQVMEGDRLVLICSVAMGTGDITFLWYKGAVGLNLQSKTQRSLTAEYEIPSVRESDAEQYYCVAENGYGPSPSGLVSITVRIPVSRPILMLRAPRAQAAVEDVLELHCEALRGSPPILYWFYHEDITLGSRSAPSGGGASFNLSLTEEHSGNYSCEANNGLGAQRSEAVTLNFTVPTGARSNHLTSGVIEGLLSTLGPATVALLFCYGLKRKIGRRSARDPLRSLPSPLPQEFTYLNSPTPGQLQPIYENVNVVSGDEVYSLAYYNQPEQESVAAETLGTHMEDKVSLDIYSRLRKANITDVDYEDAM</sequence>
<keyword id="KW-0025">Alternative splicing</keyword>
<keyword id="KW-1003">Cell membrane</keyword>
<keyword id="KW-1015">Disulfide bond</keyword>
<keyword id="KW-0325">Glycoprotein</keyword>
<keyword id="KW-0393">Immunoglobulin domain</keyword>
<keyword id="KW-0472">Membrane</keyword>
<keyword id="KW-0597">Phosphoprotein</keyword>
<keyword id="KW-1267">Proteomics identification</keyword>
<keyword id="KW-0675">Receptor</keyword>
<keyword id="KW-1185">Reference proteome</keyword>
<keyword id="KW-0677">Repeat</keyword>
<keyword id="KW-0732">Signal</keyword>
<keyword id="KW-0812">Transmembrane</keyword>
<keyword id="KW-1133">Transmembrane helix</keyword>
<dbReference type="EMBL" id="AY043464">
    <property type="protein sequence ID" value="AAK91777.1"/>
    <property type="molecule type" value="mRNA"/>
</dbReference>
<dbReference type="EMBL" id="AF329488">
    <property type="protein sequence ID" value="AAL23898.1"/>
    <property type="molecule type" value="mRNA"/>
</dbReference>
<dbReference type="EMBL" id="EF064734">
    <property type="protein sequence ID" value="ABK41917.1"/>
    <property type="molecule type" value="Genomic_DNA"/>
</dbReference>
<dbReference type="EMBL" id="AK096690">
    <property type="protein sequence ID" value="BAC04842.1"/>
    <property type="molecule type" value="mRNA"/>
</dbReference>
<dbReference type="EMBL" id="AK315748">
    <property type="protein sequence ID" value="BAG38102.1"/>
    <property type="molecule type" value="mRNA"/>
</dbReference>
<dbReference type="EMBL" id="AL833970">
    <property type="protein sequence ID" value="CAD38815.1"/>
    <property type="molecule type" value="mRNA"/>
</dbReference>
<dbReference type="EMBL" id="AL139409">
    <property type="status" value="NOT_ANNOTATED_CDS"/>
    <property type="molecule type" value="Genomic_DNA"/>
</dbReference>
<dbReference type="EMBL" id="AL356276">
    <property type="status" value="NOT_ANNOTATED_CDS"/>
    <property type="molecule type" value="Genomic_DNA"/>
</dbReference>
<dbReference type="EMBL" id="CH471121">
    <property type="protein sequence ID" value="EAW52861.1"/>
    <property type="molecule type" value="Genomic_DNA"/>
</dbReference>
<dbReference type="EMBL" id="CH471121">
    <property type="protein sequence ID" value="EAW52862.1"/>
    <property type="molecule type" value="Genomic_DNA"/>
</dbReference>
<dbReference type="EMBL" id="BC033690">
    <property type="protein sequence ID" value="AAH33690.1"/>
    <property type="molecule type" value="mRNA"/>
</dbReference>
<dbReference type="CCDS" id="CCDS1170.1">
    <molecule id="Q96LA6-1"/>
</dbReference>
<dbReference type="CCDS" id="CCDS53382.1">
    <molecule id="Q96LA6-3"/>
</dbReference>
<dbReference type="CCDS" id="CCDS53383.1">
    <molecule id="Q96LA6-2"/>
</dbReference>
<dbReference type="RefSeq" id="NP_001152869.1">
    <molecule id="Q96LA6-3"/>
    <property type="nucleotide sequence ID" value="NM_001159397.2"/>
</dbReference>
<dbReference type="RefSeq" id="NP_001152870.1">
    <molecule id="Q96LA6-2"/>
    <property type="nucleotide sequence ID" value="NM_001159398.2"/>
</dbReference>
<dbReference type="RefSeq" id="NP_443170.1">
    <molecule id="Q96LA6-1"/>
    <property type="nucleotide sequence ID" value="NM_052938.5"/>
</dbReference>
<dbReference type="SMR" id="Q96LA6"/>
<dbReference type="BioGRID" id="125427">
    <property type="interactions" value="2"/>
</dbReference>
<dbReference type="FunCoup" id="Q96LA6">
    <property type="interactions" value="12"/>
</dbReference>
<dbReference type="IntAct" id="Q96LA6">
    <property type="interactions" value="2"/>
</dbReference>
<dbReference type="STRING" id="9606.ENSP00000357158"/>
<dbReference type="GlyCosmos" id="Q96LA6">
    <property type="glycosylation" value="1 site, No reported glycans"/>
</dbReference>
<dbReference type="GlyGen" id="Q96LA6">
    <property type="glycosylation" value="2 sites"/>
</dbReference>
<dbReference type="iPTMnet" id="Q96LA6"/>
<dbReference type="PhosphoSitePlus" id="Q96LA6"/>
<dbReference type="BioMuta" id="FCRL1"/>
<dbReference type="DMDM" id="74760931"/>
<dbReference type="MassIVE" id="Q96LA6"/>
<dbReference type="PaxDb" id="9606-ENSP00000357158"/>
<dbReference type="PeptideAtlas" id="Q96LA6"/>
<dbReference type="ProteomicsDB" id="77177">
    <molecule id="Q96LA6-1"/>
</dbReference>
<dbReference type="ProteomicsDB" id="77178">
    <molecule id="Q96LA6-2"/>
</dbReference>
<dbReference type="ProteomicsDB" id="77179">
    <molecule id="Q96LA6-3"/>
</dbReference>
<dbReference type="ProteomicsDB" id="77180">
    <molecule id="Q96LA6-4"/>
</dbReference>
<dbReference type="Antibodypedia" id="2561">
    <property type="antibodies" value="201 antibodies from 27 providers"/>
</dbReference>
<dbReference type="DNASU" id="115350"/>
<dbReference type="Ensembl" id="ENST00000358292.7">
    <molecule id="Q96LA6-3"/>
    <property type="protein sequence ID" value="ENSP00000351039.3"/>
    <property type="gene ID" value="ENSG00000163534.16"/>
</dbReference>
<dbReference type="Ensembl" id="ENST00000368176.8">
    <molecule id="Q96LA6-1"/>
    <property type="protein sequence ID" value="ENSP00000357158.3"/>
    <property type="gene ID" value="ENSG00000163534.16"/>
</dbReference>
<dbReference type="Ensembl" id="ENST00000491942.2">
    <molecule id="Q96LA6-2"/>
    <property type="protein sequence ID" value="ENSP00000418130.1"/>
    <property type="gene ID" value="ENSG00000163534.16"/>
</dbReference>
<dbReference type="GeneID" id="115350"/>
<dbReference type="KEGG" id="hsa:115350"/>
<dbReference type="MANE-Select" id="ENST00000368176.8">
    <property type="protein sequence ID" value="ENSP00000357158.3"/>
    <property type="RefSeq nucleotide sequence ID" value="NM_052938.5"/>
    <property type="RefSeq protein sequence ID" value="NP_443170.1"/>
</dbReference>
<dbReference type="UCSC" id="uc001frg.4">
    <molecule id="Q96LA6-1"/>
    <property type="organism name" value="human"/>
</dbReference>
<dbReference type="AGR" id="HGNC:18509"/>
<dbReference type="CTD" id="115350"/>
<dbReference type="DisGeNET" id="115350"/>
<dbReference type="GeneCards" id="FCRL1"/>
<dbReference type="HGNC" id="HGNC:18509">
    <property type="gene designation" value="FCRL1"/>
</dbReference>
<dbReference type="HPA" id="ENSG00000163534">
    <property type="expression patterns" value="Group enriched (bone marrow, intestine, lymphoid tissue)"/>
</dbReference>
<dbReference type="MIM" id="606508">
    <property type="type" value="gene"/>
</dbReference>
<dbReference type="neXtProt" id="NX_Q96LA6"/>
<dbReference type="OpenTargets" id="ENSG00000163534"/>
<dbReference type="PharmGKB" id="PA142671766"/>
<dbReference type="VEuPathDB" id="HostDB:ENSG00000163534"/>
<dbReference type="eggNOG" id="ENOG502S65W">
    <property type="taxonomic scope" value="Eukaryota"/>
</dbReference>
<dbReference type="GeneTree" id="ENSGT01050000244808"/>
<dbReference type="HOGENOM" id="CLU_023383_0_0_1"/>
<dbReference type="InParanoid" id="Q96LA6"/>
<dbReference type="OMA" id="LWIPAVW"/>
<dbReference type="OrthoDB" id="10039395at2759"/>
<dbReference type="PAN-GO" id="Q96LA6">
    <property type="GO annotations" value="3 GO annotations based on evolutionary models"/>
</dbReference>
<dbReference type="PhylomeDB" id="Q96LA6"/>
<dbReference type="TreeFam" id="TF351107"/>
<dbReference type="PathwayCommons" id="Q96LA6"/>
<dbReference type="SignaLink" id="Q96LA6"/>
<dbReference type="BioGRID-ORCS" id="115350">
    <property type="hits" value="12 hits in 1137 CRISPR screens"/>
</dbReference>
<dbReference type="ChiTaRS" id="FCRL1">
    <property type="organism name" value="human"/>
</dbReference>
<dbReference type="GeneWiki" id="FCRL1"/>
<dbReference type="GenomeRNAi" id="115350"/>
<dbReference type="Pharos" id="Q96LA6">
    <property type="development level" value="Tbio"/>
</dbReference>
<dbReference type="PRO" id="PR:Q96LA6"/>
<dbReference type="Proteomes" id="UP000005640">
    <property type="component" value="Chromosome 1"/>
</dbReference>
<dbReference type="RNAct" id="Q96LA6">
    <property type="molecule type" value="protein"/>
</dbReference>
<dbReference type="Bgee" id="ENSG00000163534">
    <property type="expression patterns" value="Expressed in vermiform appendix and 102 other cell types or tissues"/>
</dbReference>
<dbReference type="GO" id="GO:0009986">
    <property type="term" value="C:cell surface"/>
    <property type="evidence" value="ECO:0000314"/>
    <property type="project" value="UniProtKB"/>
</dbReference>
<dbReference type="GO" id="GO:0009897">
    <property type="term" value="C:external side of plasma membrane"/>
    <property type="evidence" value="ECO:0000318"/>
    <property type="project" value="GO_Central"/>
</dbReference>
<dbReference type="GO" id="GO:0015026">
    <property type="term" value="F:coreceptor activity"/>
    <property type="evidence" value="ECO:0000314"/>
    <property type="project" value="UniProtKB"/>
</dbReference>
<dbReference type="GO" id="GO:0004888">
    <property type="term" value="F:transmembrane signaling receptor activity"/>
    <property type="evidence" value="ECO:0000318"/>
    <property type="project" value="GO_Central"/>
</dbReference>
<dbReference type="GO" id="GO:0042113">
    <property type="term" value="P:B cell activation"/>
    <property type="evidence" value="ECO:0000314"/>
    <property type="project" value="UniProtKB"/>
</dbReference>
<dbReference type="GO" id="GO:0007166">
    <property type="term" value="P:cell surface receptor signaling pathway"/>
    <property type="evidence" value="ECO:0000318"/>
    <property type="project" value="GO_Central"/>
</dbReference>
<dbReference type="GO" id="GO:0006955">
    <property type="term" value="P:immune response"/>
    <property type="evidence" value="ECO:0000318"/>
    <property type="project" value="GO_Central"/>
</dbReference>
<dbReference type="CDD" id="cd00096">
    <property type="entry name" value="Ig"/>
    <property type="match status" value="1"/>
</dbReference>
<dbReference type="FunFam" id="2.60.40.10:FF:000357">
    <property type="entry name" value="Fc receptor like 1"/>
    <property type="match status" value="1"/>
</dbReference>
<dbReference type="FunFam" id="2.60.40.10:FF:000592">
    <property type="entry name" value="Fc receptor like 1"/>
    <property type="match status" value="1"/>
</dbReference>
<dbReference type="FunFam" id="2.60.40.10:FF:000651">
    <property type="entry name" value="Fc receptor like 1"/>
    <property type="match status" value="1"/>
</dbReference>
<dbReference type="Gene3D" id="2.60.40.10">
    <property type="entry name" value="Immunoglobulins"/>
    <property type="match status" value="3"/>
</dbReference>
<dbReference type="InterPro" id="IPR007110">
    <property type="entry name" value="Ig-like_dom"/>
</dbReference>
<dbReference type="InterPro" id="IPR036179">
    <property type="entry name" value="Ig-like_dom_sf"/>
</dbReference>
<dbReference type="InterPro" id="IPR013783">
    <property type="entry name" value="Ig-like_fold"/>
</dbReference>
<dbReference type="InterPro" id="IPR050488">
    <property type="entry name" value="Ig_Fc_receptor"/>
</dbReference>
<dbReference type="InterPro" id="IPR003599">
    <property type="entry name" value="Ig_sub"/>
</dbReference>
<dbReference type="InterPro" id="IPR003598">
    <property type="entry name" value="Ig_sub2"/>
</dbReference>
<dbReference type="PANTHER" id="PTHR11481:SF117">
    <property type="entry name" value="FC RECEPTOR-LIKE PROTEIN 1"/>
    <property type="match status" value="1"/>
</dbReference>
<dbReference type="PANTHER" id="PTHR11481">
    <property type="entry name" value="IMMUNOGLOBULIN FC RECEPTOR"/>
    <property type="match status" value="1"/>
</dbReference>
<dbReference type="Pfam" id="PF13927">
    <property type="entry name" value="Ig_3"/>
    <property type="match status" value="2"/>
</dbReference>
<dbReference type="SMART" id="SM00409">
    <property type="entry name" value="IG"/>
    <property type="match status" value="3"/>
</dbReference>
<dbReference type="SMART" id="SM00408">
    <property type="entry name" value="IGc2"/>
    <property type="match status" value="3"/>
</dbReference>
<dbReference type="SUPFAM" id="SSF48726">
    <property type="entry name" value="Immunoglobulin"/>
    <property type="match status" value="3"/>
</dbReference>
<dbReference type="PROSITE" id="PS50835">
    <property type="entry name" value="IG_LIKE"/>
    <property type="match status" value="3"/>
</dbReference>